<feature type="chain" id="PRO_0000087389" description="Friend virus susceptibility protein 1">
    <location>
        <begin position="1"/>
        <end position="459"/>
    </location>
</feature>
<feature type="region of interest" description="Disordered" evidence="1">
    <location>
        <begin position="192"/>
        <end position="269"/>
    </location>
</feature>
<feature type="compositionally biased region" description="Basic and acidic residues" evidence="1">
    <location>
        <begin position="213"/>
        <end position="223"/>
    </location>
</feature>
<feature type="compositionally biased region" description="Polar residues" evidence="1">
    <location>
        <begin position="226"/>
        <end position="238"/>
    </location>
</feature>
<feature type="sequence variant" description="In strain: AKR/J, C3H and DBA/2.">
    <original>E</original>
    <variation>K</variation>
    <location>
        <position position="358"/>
    </location>
</feature>
<feature type="sequence variant" description="In strain: AKR/J, C3H and DBA/2; requires 2 nucleotide substitutions.">
    <original>R</original>
    <variation>V</variation>
    <location>
        <position position="399"/>
    </location>
</feature>
<feature type="sequence variant" description="In strain: AKR/J, C3H and DBA/2.">
    <original>GLTSVGSVGVLSLSPWKHQSNS</original>
    <variation>TKL</variation>
    <location>
        <begin position="438"/>
        <end position="459"/>
    </location>
</feature>
<comment type="function">
    <text evidence="2">Retroviral restriction factor that prevents infection by gammaretroviruses. Acts by interacting with the capsid protein ca after entry of the virus into the cell. This interaction presumably disrupt the capsid thereby inactivating the viral genome, making it unable to enter host nucleus and integrate into host genome.</text>
</comment>
<gene>
    <name type="primary">Fv1</name>
</gene>
<accession>P70213</accession>
<accession>P70214</accession>
<organism>
    <name type="scientific">Mus musculus</name>
    <name type="common">Mouse</name>
    <dbReference type="NCBI Taxonomy" id="10090"/>
    <lineage>
        <taxon>Eukaryota</taxon>
        <taxon>Metazoa</taxon>
        <taxon>Chordata</taxon>
        <taxon>Craniata</taxon>
        <taxon>Vertebrata</taxon>
        <taxon>Euteleostomi</taxon>
        <taxon>Mammalia</taxon>
        <taxon>Eutheria</taxon>
        <taxon>Euarchontoglires</taxon>
        <taxon>Glires</taxon>
        <taxon>Rodentia</taxon>
        <taxon>Myomorpha</taxon>
        <taxon>Muroidea</taxon>
        <taxon>Muridae</taxon>
        <taxon>Murinae</taxon>
        <taxon>Mus</taxon>
        <taxon>Mus</taxon>
    </lineage>
</organism>
<proteinExistence type="predicted"/>
<reference key="1">
    <citation type="journal article" date="1996" name="Nature">
        <title>Positional cloning of the mouse retrovirus restriction gene Fv1.</title>
        <authorList>
            <person name="Best S."/>
            <person name="le Tissier P."/>
            <person name="Towers G."/>
            <person name="Stoye J.P."/>
        </authorList>
    </citation>
    <scope>NUCLEOTIDE SEQUENCE [GENOMIC DNA]</scope>
    <source>
        <strain>AKR/J</strain>
        <strain>BALB/cJ</strain>
        <strain>C3H/HeJ</strain>
        <strain>C57BL/6J</strain>
        <strain>DBA/2J</strain>
    </source>
</reference>
<reference key="2">
    <citation type="journal article" date="2006" name="J. Virol.">
        <title>Retroviral restriction factors Fv1 and TRIM5alpha act independently and can compete for incoming virus before reverse transcription.</title>
        <authorList>
            <person name="Passerini L.D."/>
            <person name="Keckesova Z."/>
            <person name="Towers G.J."/>
        </authorList>
    </citation>
    <scope>FUNCTION</scope>
</reference>
<dbReference type="EMBL" id="X97719">
    <property type="protein sequence ID" value="CAA66305.1"/>
    <property type="molecule type" value="Genomic_DNA"/>
</dbReference>
<dbReference type="EMBL" id="X97720">
    <property type="protein sequence ID" value="CAA66306.1"/>
    <property type="molecule type" value="Genomic_DNA"/>
</dbReference>
<dbReference type="CCDS" id="CCDS38964.1"/>
<dbReference type="RefSeq" id="NP_034374.2">
    <property type="nucleotide sequence ID" value="NM_010244.3"/>
</dbReference>
<dbReference type="SMR" id="P70213"/>
<dbReference type="STRING" id="10090.ENSMUSP00000092054"/>
<dbReference type="GlyGen" id="P70213">
    <property type="glycosylation" value="1 site, 1 N-linked glycan (1 site)"/>
</dbReference>
<dbReference type="iPTMnet" id="P70213"/>
<dbReference type="PhosphoSitePlus" id="P70213"/>
<dbReference type="jPOST" id="P70213"/>
<dbReference type="PaxDb" id="10090-ENSMUSP00000092054"/>
<dbReference type="PeptideAtlas" id="P70213"/>
<dbReference type="ProteomicsDB" id="273016"/>
<dbReference type="Pumba" id="P70213"/>
<dbReference type="Ensembl" id="ENSMUST00000094481.2">
    <property type="protein sequence ID" value="ENSMUSP00000092054.2"/>
    <property type="gene ID" value="ENSMUSG00000070583.2"/>
</dbReference>
<dbReference type="GeneID" id="14349"/>
<dbReference type="KEGG" id="mmu:14349"/>
<dbReference type="UCSC" id="uc008vtf.1">
    <property type="organism name" value="mouse"/>
</dbReference>
<dbReference type="AGR" id="MGI:95595"/>
<dbReference type="CTD" id="14349"/>
<dbReference type="MGI" id="MGI:95595">
    <property type="gene designation" value="Fv1"/>
</dbReference>
<dbReference type="VEuPathDB" id="HostDB:ENSMUSG00000070583"/>
<dbReference type="eggNOG" id="ENOG502SDWT">
    <property type="taxonomic scope" value="Eukaryota"/>
</dbReference>
<dbReference type="GeneTree" id="ENSGT00940000168197"/>
<dbReference type="HOGENOM" id="CLU_595745_0_0_1"/>
<dbReference type="InParanoid" id="P70213"/>
<dbReference type="OMA" id="VWDNGGR"/>
<dbReference type="OrthoDB" id="9909099at2759"/>
<dbReference type="TreeFam" id="TF339753"/>
<dbReference type="BioGRID-ORCS" id="14349">
    <property type="hits" value="0 hits in 77 CRISPR screens"/>
</dbReference>
<dbReference type="ChiTaRS" id="Fv1">
    <property type="organism name" value="mouse"/>
</dbReference>
<dbReference type="PRO" id="PR:P70213"/>
<dbReference type="Proteomes" id="UP000000589">
    <property type="component" value="Chromosome 4"/>
</dbReference>
<dbReference type="RNAct" id="P70213">
    <property type="molecule type" value="protein"/>
</dbReference>
<dbReference type="Bgee" id="ENSMUSG00000070583">
    <property type="expression patterns" value="Expressed in ventricular zone and 152 other cell types or tissues"/>
</dbReference>
<dbReference type="GO" id="GO:0005794">
    <property type="term" value="C:Golgi apparatus"/>
    <property type="evidence" value="ECO:0000314"/>
    <property type="project" value="MGI"/>
</dbReference>
<dbReference type="GO" id="GO:0051607">
    <property type="term" value="P:defense response to virus"/>
    <property type="evidence" value="ECO:0007669"/>
    <property type="project" value="UniProtKB-KW"/>
</dbReference>
<dbReference type="GO" id="GO:0009615">
    <property type="term" value="P:response to virus"/>
    <property type="evidence" value="ECO:0000314"/>
    <property type="project" value="MGI"/>
</dbReference>
<dbReference type="InterPro" id="IPR053270">
    <property type="entry name" value="Fv1_restriction_factor"/>
</dbReference>
<dbReference type="PANTHER" id="PTHR48195">
    <property type="entry name" value="FRIEND VIRUS SUSCEPTIBILITY PROTEIN 1"/>
    <property type="match status" value="1"/>
</dbReference>
<dbReference type="PANTHER" id="PTHR48195:SF2">
    <property type="entry name" value="FRIEND VIRUS SUSCEPTIBILITY PROTEIN 1"/>
    <property type="match status" value="1"/>
</dbReference>
<keyword id="KW-0051">Antiviral defense</keyword>
<keyword id="KW-0945">Host-virus interaction</keyword>
<keyword id="KW-1185">Reference proteome</keyword>
<sequence>MNFPRALAGFSSWLFKPELAEDSPDNDSPDNDTVNPWRELLQKINVADLPDSSFSSGKELNDSVYHTFEHFCKIRDYDAVGELLLAFLDKVTKERDQFRDEISQLRMHINDLKASKCVLGETLLSYRHRIEVGEKQTEALIVRLADVQSQVMCQPARKVSADKVRALIGKEWDPVTWDGDVWEDIDSEGSEEAELPTVLASPSLSEESGYALSKERTQQDKADAPQIQSSTSLVTSEPVTRPKSLSDLTSQKHRHTNHELNSLAHSNRQKAKEHARKWILRVWDNGGRLTILDQIEFLSLGPLSLDSEFNVIARTVEDNGVKSLFDWLAEAWVQRWPTTRELQSPDTLEWYSIEDGIERLRELGMIEWLCVKATCPQWRGPEDVPITRAMRITFVRETRETWKSFVFSLLCIKDITVGSVAAQLHDLIELSLKPTAAGLTSVGSVGVLSLSPWKHQSNS</sequence>
<name>FV1_MOUSE</name>
<protein>
    <recommendedName>
        <fullName>Friend virus susceptibility protein 1</fullName>
    </recommendedName>
</protein>
<evidence type="ECO:0000256" key="1">
    <source>
        <dbReference type="SAM" id="MobiDB-lite"/>
    </source>
</evidence>
<evidence type="ECO:0000269" key="2">
    <source>
    </source>
</evidence>